<name>Y8027_DICDI</name>
<feature type="signal peptide" evidence="1">
    <location>
        <begin position="1"/>
        <end position="26"/>
    </location>
</feature>
<feature type="chain" id="PRO_0000346980" description="Putative uncharacterized transmembrane protein DDB_G0288627">
    <location>
        <begin position="27"/>
        <end position="403"/>
    </location>
</feature>
<feature type="topological domain" description="Extracellular" evidence="1">
    <location>
        <begin position="27"/>
        <end position="381"/>
    </location>
</feature>
<feature type="transmembrane region" description="Helical" evidence="1">
    <location>
        <begin position="382"/>
        <end position="402"/>
    </location>
</feature>
<feature type="topological domain" description="Cytoplasmic" evidence="1">
    <location>
        <position position="403"/>
    </location>
</feature>
<feature type="glycosylation site" description="N-linked (GlcNAc...) asparagine" evidence="1">
    <location>
        <position position="58"/>
    </location>
</feature>
<feature type="glycosylation site" description="N-linked (GlcNAc...) asparagine" evidence="1">
    <location>
        <position position="90"/>
    </location>
</feature>
<feature type="glycosylation site" description="N-linked (GlcNAc...) asparagine" evidence="1">
    <location>
        <position position="93"/>
    </location>
</feature>
<feature type="glycosylation site" description="N-linked (GlcNAc...) asparagine" evidence="1">
    <location>
        <position position="124"/>
    </location>
</feature>
<feature type="glycosylation site" description="N-linked (GlcNAc...) asparagine" evidence="1">
    <location>
        <position position="137"/>
    </location>
</feature>
<feature type="glycosylation site" description="N-linked (GlcNAc...) asparagine" evidence="1">
    <location>
        <position position="371"/>
    </location>
</feature>
<feature type="glycosylation site" description="N-linked (GlcNAc...) asparagine" evidence="1">
    <location>
        <position position="375"/>
    </location>
</feature>
<proteinExistence type="inferred from homology"/>
<protein>
    <recommendedName>
        <fullName>Putative uncharacterized transmembrane protein DDB_G0288627</fullName>
    </recommendedName>
</protein>
<keyword id="KW-0325">Glycoprotein</keyword>
<keyword id="KW-0472">Membrane</keyword>
<keyword id="KW-1185">Reference proteome</keyword>
<keyword id="KW-0732">Signal</keyword>
<keyword id="KW-0812">Transmembrane</keyword>
<keyword id="KW-1133">Transmembrane helix</keyword>
<sequence>MYKFKTNLFLVIYFIAIFSIESSISSFNTEINSNSNSDFGHMEIPKNIEDIPFICYNNLSDSSYYLKNNQYFYEPISTIIDNSVSYFPNNCSNISDKNSLSCCLKIDSDQFKSTMDYITSDSLNTSVIGRLYDCRTNSSLGGGFKIVEDNGNTPDLETMSNELDVIDSRESVKICLSQLQQLQCFKCSQDHKTILRDFHTDLLYRIESDPNHQPLFYIKSSTFKHPIIDTSNDGFPTTGAGGADNTIHYIEKDISKGKSIAICNDYFEKLMSHCQFVNVRGKPLNQLFQPLNGKPAVFDSENYINEIFGITIPNLNEFVYVSSDNLDLFYVSNFNCFKQPIPNFQQPTCSLIINKKWYEKSQNSNDYNNNNDSDNSSFGISIQKYLNSFLNSFIIILIINIII</sequence>
<accession>Q54IN7</accession>
<comment type="subcellular location">
    <subcellularLocation>
        <location evidence="2">Membrane</location>
        <topology evidence="2">Single-pass type I membrane protein</topology>
    </subcellularLocation>
</comment>
<organism>
    <name type="scientific">Dictyostelium discoideum</name>
    <name type="common">Social amoeba</name>
    <dbReference type="NCBI Taxonomy" id="44689"/>
    <lineage>
        <taxon>Eukaryota</taxon>
        <taxon>Amoebozoa</taxon>
        <taxon>Evosea</taxon>
        <taxon>Eumycetozoa</taxon>
        <taxon>Dictyostelia</taxon>
        <taxon>Dictyosteliales</taxon>
        <taxon>Dictyosteliaceae</taxon>
        <taxon>Dictyostelium</taxon>
    </lineage>
</organism>
<reference key="1">
    <citation type="journal article" date="2005" name="Nature">
        <title>The genome of the social amoeba Dictyostelium discoideum.</title>
        <authorList>
            <person name="Eichinger L."/>
            <person name="Pachebat J.A."/>
            <person name="Gloeckner G."/>
            <person name="Rajandream M.A."/>
            <person name="Sucgang R."/>
            <person name="Berriman M."/>
            <person name="Song J."/>
            <person name="Olsen R."/>
            <person name="Szafranski K."/>
            <person name="Xu Q."/>
            <person name="Tunggal B."/>
            <person name="Kummerfeld S."/>
            <person name="Madera M."/>
            <person name="Konfortov B.A."/>
            <person name="Rivero F."/>
            <person name="Bankier A.T."/>
            <person name="Lehmann R."/>
            <person name="Hamlin N."/>
            <person name="Davies R."/>
            <person name="Gaudet P."/>
            <person name="Fey P."/>
            <person name="Pilcher K."/>
            <person name="Chen G."/>
            <person name="Saunders D."/>
            <person name="Sodergren E.J."/>
            <person name="Davis P."/>
            <person name="Kerhornou A."/>
            <person name="Nie X."/>
            <person name="Hall N."/>
            <person name="Anjard C."/>
            <person name="Hemphill L."/>
            <person name="Bason N."/>
            <person name="Farbrother P."/>
            <person name="Desany B."/>
            <person name="Just E."/>
            <person name="Morio T."/>
            <person name="Rost R."/>
            <person name="Churcher C.M."/>
            <person name="Cooper J."/>
            <person name="Haydock S."/>
            <person name="van Driessche N."/>
            <person name="Cronin A."/>
            <person name="Goodhead I."/>
            <person name="Muzny D.M."/>
            <person name="Mourier T."/>
            <person name="Pain A."/>
            <person name="Lu M."/>
            <person name="Harper D."/>
            <person name="Lindsay R."/>
            <person name="Hauser H."/>
            <person name="James K.D."/>
            <person name="Quiles M."/>
            <person name="Madan Babu M."/>
            <person name="Saito T."/>
            <person name="Buchrieser C."/>
            <person name="Wardroper A."/>
            <person name="Felder M."/>
            <person name="Thangavelu M."/>
            <person name="Johnson D."/>
            <person name="Knights A."/>
            <person name="Loulseged H."/>
            <person name="Mungall K.L."/>
            <person name="Oliver K."/>
            <person name="Price C."/>
            <person name="Quail M.A."/>
            <person name="Urushihara H."/>
            <person name="Hernandez J."/>
            <person name="Rabbinowitsch E."/>
            <person name="Steffen D."/>
            <person name="Sanders M."/>
            <person name="Ma J."/>
            <person name="Kohara Y."/>
            <person name="Sharp S."/>
            <person name="Simmonds M.N."/>
            <person name="Spiegler S."/>
            <person name="Tivey A."/>
            <person name="Sugano S."/>
            <person name="White B."/>
            <person name="Walker D."/>
            <person name="Woodward J.R."/>
            <person name="Winckler T."/>
            <person name="Tanaka Y."/>
            <person name="Shaulsky G."/>
            <person name="Schleicher M."/>
            <person name="Weinstock G.M."/>
            <person name="Rosenthal A."/>
            <person name="Cox E.C."/>
            <person name="Chisholm R.L."/>
            <person name="Gibbs R.A."/>
            <person name="Loomis W.F."/>
            <person name="Platzer M."/>
            <person name="Kay R.R."/>
            <person name="Williams J.G."/>
            <person name="Dear P.H."/>
            <person name="Noegel A.A."/>
            <person name="Barrell B.G."/>
            <person name="Kuspa A."/>
        </authorList>
    </citation>
    <scope>NUCLEOTIDE SEQUENCE [LARGE SCALE GENOMIC DNA]</scope>
    <source>
        <strain>AX4</strain>
    </source>
</reference>
<dbReference type="EMBL" id="AAFI02000119">
    <property type="protein sequence ID" value="EAL63117.1"/>
    <property type="molecule type" value="Genomic_DNA"/>
</dbReference>
<dbReference type="RefSeq" id="XP_636621.1">
    <property type="nucleotide sequence ID" value="XM_631529.1"/>
</dbReference>
<dbReference type="FunCoup" id="Q54IN7">
    <property type="interactions" value="744"/>
</dbReference>
<dbReference type="STRING" id="44689.Q54IN7"/>
<dbReference type="GlyGen" id="Q54IN7">
    <property type="glycosylation" value="7 sites"/>
</dbReference>
<dbReference type="PaxDb" id="44689-DDB0188027"/>
<dbReference type="EnsemblProtists" id="EAL63117">
    <property type="protein sequence ID" value="EAL63117"/>
    <property type="gene ID" value="DDB_G0288627"/>
</dbReference>
<dbReference type="GeneID" id="8626723"/>
<dbReference type="KEGG" id="ddi:DDB_G0288627"/>
<dbReference type="dictyBase" id="DDB_G0288627"/>
<dbReference type="VEuPathDB" id="AmoebaDB:DDB_G0288627"/>
<dbReference type="eggNOG" id="ENOG502RHB3">
    <property type="taxonomic scope" value="Eukaryota"/>
</dbReference>
<dbReference type="HOGENOM" id="CLU_684115_0_0_1"/>
<dbReference type="InParanoid" id="Q54IN7"/>
<dbReference type="OMA" id="HIVIFTI"/>
<dbReference type="PRO" id="PR:Q54IN7"/>
<dbReference type="Proteomes" id="UP000002195">
    <property type="component" value="Chromosome 5"/>
</dbReference>
<dbReference type="GO" id="GO:0016020">
    <property type="term" value="C:membrane"/>
    <property type="evidence" value="ECO:0007669"/>
    <property type="project" value="UniProtKB-SubCell"/>
</dbReference>
<gene>
    <name type="ORF">DDB_G0288627</name>
</gene>
<evidence type="ECO:0000255" key="1"/>
<evidence type="ECO:0000305" key="2"/>